<feature type="chain" id="PRO_1000128677" description="Large ribosomal subunit protein bL27">
    <location>
        <begin position="1"/>
        <end position="85"/>
    </location>
</feature>
<feature type="region of interest" description="Disordered" evidence="2">
    <location>
        <begin position="1"/>
        <end position="20"/>
    </location>
</feature>
<name>RL27_ACIBC</name>
<dbReference type="EMBL" id="CP000863">
    <property type="protein sequence ID" value="ACC58294.1"/>
    <property type="molecule type" value="Genomic_DNA"/>
</dbReference>
<dbReference type="RefSeq" id="WP_000201632.1">
    <property type="nucleotide sequence ID" value="NZ_CP031380.1"/>
</dbReference>
<dbReference type="SMR" id="B2HXU8"/>
<dbReference type="GeneID" id="92895005"/>
<dbReference type="KEGG" id="abc:ACICU_02982"/>
<dbReference type="HOGENOM" id="CLU_095424_4_1_6"/>
<dbReference type="Proteomes" id="UP000008839">
    <property type="component" value="Chromosome"/>
</dbReference>
<dbReference type="GO" id="GO:0022625">
    <property type="term" value="C:cytosolic large ribosomal subunit"/>
    <property type="evidence" value="ECO:0007669"/>
    <property type="project" value="TreeGrafter"/>
</dbReference>
<dbReference type="GO" id="GO:0003735">
    <property type="term" value="F:structural constituent of ribosome"/>
    <property type="evidence" value="ECO:0007669"/>
    <property type="project" value="InterPro"/>
</dbReference>
<dbReference type="GO" id="GO:0006412">
    <property type="term" value="P:translation"/>
    <property type="evidence" value="ECO:0007669"/>
    <property type="project" value="UniProtKB-UniRule"/>
</dbReference>
<dbReference type="FunFam" id="2.40.50.100:FF:000001">
    <property type="entry name" value="50S ribosomal protein L27"/>
    <property type="match status" value="1"/>
</dbReference>
<dbReference type="Gene3D" id="2.40.50.100">
    <property type="match status" value="1"/>
</dbReference>
<dbReference type="HAMAP" id="MF_00539">
    <property type="entry name" value="Ribosomal_bL27"/>
    <property type="match status" value="1"/>
</dbReference>
<dbReference type="InterPro" id="IPR001684">
    <property type="entry name" value="Ribosomal_bL27"/>
</dbReference>
<dbReference type="InterPro" id="IPR018261">
    <property type="entry name" value="Ribosomal_bL27_CS"/>
</dbReference>
<dbReference type="NCBIfam" id="TIGR00062">
    <property type="entry name" value="L27"/>
    <property type="match status" value="1"/>
</dbReference>
<dbReference type="PANTHER" id="PTHR15893:SF0">
    <property type="entry name" value="LARGE RIBOSOMAL SUBUNIT PROTEIN BL27M"/>
    <property type="match status" value="1"/>
</dbReference>
<dbReference type="PANTHER" id="PTHR15893">
    <property type="entry name" value="RIBOSOMAL PROTEIN L27"/>
    <property type="match status" value="1"/>
</dbReference>
<dbReference type="Pfam" id="PF01016">
    <property type="entry name" value="Ribosomal_L27"/>
    <property type="match status" value="1"/>
</dbReference>
<dbReference type="PRINTS" id="PR00063">
    <property type="entry name" value="RIBOSOMALL27"/>
</dbReference>
<dbReference type="SUPFAM" id="SSF110324">
    <property type="entry name" value="Ribosomal L27 protein-like"/>
    <property type="match status" value="1"/>
</dbReference>
<dbReference type="PROSITE" id="PS00831">
    <property type="entry name" value="RIBOSOMAL_L27"/>
    <property type="match status" value="1"/>
</dbReference>
<protein>
    <recommendedName>
        <fullName evidence="1">Large ribosomal subunit protein bL27</fullName>
    </recommendedName>
    <alternativeName>
        <fullName evidence="3">50S ribosomal protein L27</fullName>
    </alternativeName>
</protein>
<keyword id="KW-0687">Ribonucleoprotein</keyword>
<keyword id="KW-0689">Ribosomal protein</keyword>
<gene>
    <name evidence="1" type="primary">rpmA</name>
    <name type="ordered locus">ACICU_02982</name>
</gene>
<sequence>MATKKAGGSTKNGRDSNPKMLGVKVYGGQTVTAGNIIVRQRGTEFHAGANVGMGRDHTLFATADGVVKFEVKGQFGRRYVKVETV</sequence>
<accession>B2HXU8</accession>
<organism>
    <name type="scientific">Acinetobacter baumannii (strain ACICU)</name>
    <dbReference type="NCBI Taxonomy" id="405416"/>
    <lineage>
        <taxon>Bacteria</taxon>
        <taxon>Pseudomonadati</taxon>
        <taxon>Pseudomonadota</taxon>
        <taxon>Gammaproteobacteria</taxon>
        <taxon>Moraxellales</taxon>
        <taxon>Moraxellaceae</taxon>
        <taxon>Acinetobacter</taxon>
        <taxon>Acinetobacter calcoaceticus/baumannii complex</taxon>
    </lineage>
</organism>
<proteinExistence type="inferred from homology"/>
<reference key="1">
    <citation type="journal article" date="2008" name="Antimicrob. Agents Chemother.">
        <title>Whole-genome pyrosequencing of an epidemic multidrug-resistant Acinetobacter baumannii strain belonging to the European clone II group.</title>
        <authorList>
            <person name="Iacono M."/>
            <person name="Villa L."/>
            <person name="Fortini D."/>
            <person name="Bordoni R."/>
            <person name="Imperi F."/>
            <person name="Bonnal R.J."/>
            <person name="Sicheritz-Ponten T."/>
            <person name="De Bellis G."/>
            <person name="Visca P."/>
            <person name="Cassone A."/>
            <person name="Carattoli A."/>
        </authorList>
    </citation>
    <scope>NUCLEOTIDE SEQUENCE [LARGE SCALE GENOMIC DNA]</scope>
    <source>
        <strain>ACICU</strain>
    </source>
</reference>
<comment type="similarity">
    <text evidence="1">Belongs to the bacterial ribosomal protein bL27 family.</text>
</comment>
<evidence type="ECO:0000255" key="1">
    <source>
        <dbReference type="HAMAP-Rule" id="MF_00539"/>
    </source>
</evidence>
<evidence type="ECO:0000256" key="2">
    <source>
        <dbReference type="SAM" id="MobiDB-lite"/>
    </source>
</evidence>
<evidence type="ECO:0000305" key="3"/>